<proteinExistence type="inferred from homology"/>
<organism>
    <name type="scientific">Haemophilus influenzae (strain ATCC 51907 / DSM 11121 / KW20 / Rd)</name>
    <dbReference type="NCBI Taxonomy" id="71421"/>
    <lineage>
        <taxon>Bacteria</taxon>
        <taxon>Pseudomonadati</taxon>
        <taxon>Pseudomonadota</taxon>
        <taxon>Gammaproteobacteria</taxon>
        <taxon>Pasteurellales</taxon>
        <taxon>Pasteurellaceae</taxon>
        <taxon>Haemophilus</taxon>
    </lineage>
</organism>
<accession>P44781</accession>
<protein>
    <recommendedName>
        <fullName evidence="1">RNA polymerase-associated protein RapA</fullName>
        <ecNumber evidence="1">3.6.4.-</ecNumber>
    </recommendedName>
    <alternativeName>
        <fullName evidence="1">ATP-dependent helicase HepA</fullName>
    </alternativeName>
</protein>
<feature type="chain" id="PRO_0000207177" description="RNA polymerase-associated protein RapA">
    <location>
        <begin position="1"/>
        <end position="923"/>
    </location>
</feature>
<feature type="domain" description="Helicase ATP-binding" evidence="1">
    <location>
        <begin position="162"/>
        <end position="332"/>
    </location>
</feature>
<feature type="domain" description="Helicase C-terminal" evidence="1">
    <location>
        <begin position="443"/>
        <end position="597"/>
    </location>
</feature>
<feature type="short sequence motif" description="DEAH box">
    <location>
        <begin position="278"/>
        <end position="281"/>
    </location>
</feature>
<feature type="binding site" evidence="1">
    <location>
        <begin position="175"/>
        <end position="182"/>
    </location>
    <ligand>
        <name>ATP</name>
        <dbReference type="ChEBI" id="CHEBI:30616"/>
    </ligand>
</feature>
<keyword id="KW-0010">Activator</keyword>
<keyword id="KW-0067">ATP-binding</keyword>
<keyword id="KW-0238">DNA-binding</keyword>
<keyword id="KW-0347">Helicase</keyword>
<keyword id="KW-0378">Hydrolase</keyword>
<keyword id="KW-0547">Nucleotide-binding</keyword>
<keyword id="KW-1185">Reference proteome</keyword>
<keyword id="KW-0804">Transcription</keyword>
<keyword id="KW-0805">Transcription regulation</keyword>
<reference key="1">
    <citation type="journal article" date="1995" name="Science">
        <title>Whole-genome random sequencing and assembly of Haemophilus influenzae Rd.</title>
        <authorList>
            <person name="Fleischmann R.D."/>
            <person name="Adams M.D."/>
            <person name="White O."/>
            <person name="Clayton R.A."/>
            <person name="Kirkness E.F."/>
            <person name="Kerlavage A.R."/>
            <person name="Bult C.J."/>
            <person name="Tomb J.-F."/>
            <person name="Dougherty B.A."/>
            <person name="Merrick J.M."/>
            <person name="McKenney K."/>
            <person name="Sutton G.G."/>
            <person name="FitzHugh W."/>
            <person name="Fields C.A."/>
            <person name="Gocayne J.D."/>
            <person name="Scott J.D."/>
            <person name="Shirley R."/>
            <person name="Liu L.-I."/>
            <person name="Glodek A."/>
            <person name="Kelley J.M."/>
            <person name="Weidman J.F."/>
            <person name="Phillips C.A."/>
            <person name="Spriggs T."/>
            <person name="Hedblom E."/>
            <person name="Cotton M.D."/>
            <person name="Utterback T.R."/>
            <person name="Hanna M.C."/>
            <person name="Nguyen D.T."/>
            <person name="Saudek D.M."/>
            <person name="Brandon R.C."/>
            <person name="Fine L.D."/>
            <person name="Fritchman J.L."/>
            <person name="Fuhrmann J.L."/>
            <person name="Geoghagen N.S.M."/>
            <person name="Gnehm C.L."/>
            <person name="McDonald L.A."/>
            <person name="Small K.V."/>
            <person name="Fraser C.M."/>
            <person name="Smith H.O."/>
            <person name="Venter J.C."/>
        </authorList>
    </citation>
    <scope>NUCLEOTIDE SEQUENCE [LARGE SCALE GENOMIC DNA]</scope>
    <source>
        <strain>ATCC 51907 / DSM 11121 / KW20 / Rd</strain>
    </source>
</reference>
<name>RAPA_HAEIN</name>
<gene>
    <name evidence="1" type="primary">rapA</name>
    <name type="synonym">hepA</name>
    <name type="ordered locus">HI_0616</name>
</gene>
<sequence length="923" mass="104405">MPFAIGQRWLSESENALGLGVITALDQRTVTIYFPAADETRIYAMAQAPLSRIVFSKGETLSHQAGWQGEILDVQNMNGLLFYLVKNPQDEDVIVQERDISPIISFSQAKDRLFSAQIDRSTHFALRYRTLCHQQAQFKSPLRGLRGTRASLIPHQLHIAAEVGNRVNPRVLLADEVGLGKTIEAGMILQNQLFAEKVQRVLIIVPETLQHQWLVEMLRRFNLHFALFDEERCNDFDLDAVNPFTTESLIICSLNWLETHPNRVELVLNAQFDCLIVDEAHHLVWSETSPSTAYLLVEQLARIIPSVLLLTATPEQLGQESHFARLRLLDPERFFDYQTFVKEQEHYQPVVNAVESLLANKALSAVEKNHISDLLLEQDVEPLFKAIASNNDEEQQRARQELIQALIDRHGTGRMLFRNTRQGVKGFPHRVYHQITLSEENDKIDWLIDFLKLHRNEKIFVICQTAATAIQLEQILREREAIRAAVFHEKMSIIERDRAAAYFADLENGAQVLLSSSIGSEGRNFQFAANLVLFDLPTNPDLLEQCIGRLDRIGQKRDVQVYVPCAKDSPQSRLARWYNEGLNAFEQTCPMGMALFSQFADELEKVRSNSTALSENEFSGLLKQTKTAREKLKIELEKGRDRLLELNSHGGEQAQALADQIADEDNSPELVNFALKLFDIIGVEQEDLGANSIVISPTGTMLVPDFPGLKEEGVTVTFDRELALAREEMEFLTWDHPMIRQGIDLVASGDIGKAAMALLVNKQLPAGTLLIELIYVVESQSPKGLQLNRFLPPTPIRLLLDNKGNNIGEQVAFETLHSKLKPLGKNITNQMVKMARSNIESLIMRGDQLVKSLAEPIIAEAKNQADQQLSAEINRLQALRAVNKNIRQSEIDILEQQRTQSLDELSKANWRLDCLRVIVTNKE</sequence>
<dbReference type="EC" id="3.6.4.-" evidence="1"/>
<dbReference type="EMBL" id="L42023">
    <property type="protein sequence ID" value="AAC22275.1"/>
    <property type="molecule type" value="Genomic_DNA"/>
</dbReference>
<dbReference type="PIR" id="H64081">
    <property type="entry name" value="H64081"/>
</dbReference>
<dbReference type="RefSeq" id="NP_438774.1">
    <property type="nucleotide sequence ID" value="NC_000907.1"/>
</dbReference>
<dbReference type="SMR" id="P44781"/>
<dbReference type="STRING" id="71421.HI_0616"/>
<dbReference type="EnsemblBacteria" id="AAC22275">
    <property type="protein sequence ID" value="AAC22275"/>
    <property type="gene ID" value="HI_0616"/>
</dbReference>
<dbReference type="KEGG" id="hin:HI_0616"/>
<dbReference type="PATRIC" id="fig|71421.8.peg.640"/>
<dbReference type="eggNOG" id="COG0553">
    <property type="taxonomic scope" value="Bacteria"/>
</dbReference>
<dbReference type="HOGENOM" id="CLU_011520_0_0_6"/>
<dbReference type="OrthoDB" id="9814088at2"/>
<dbReference type="PhylomeDB" id="P44781"/>
<dbReference type="BioCyc" id="HINF71421:G1GJ1-637-MONOMER"/>
<dbReference type="Proteomes" id="UP000000579">
    <property type="component" value="Chromosome"/>
</dbReference>
<dbReference type="GO" id="GO:0005524">
    <property type="term" value="F:ATP binding"/>
    <property type="evidence" value="ECO:0007669"/>
    <property type="project" value="UniProtKB-UniRule"/>
</dbReference>
<dbReference type="GO" id="GO:0003677">
    <property type="term" value="F:DNA binding"/>
    <property type="evidence" value="ECO:0007669"/>
    <property type="project" value="UniProtKB-KW"/>
</dbReference>
<dbReference type="GO" id="GO:0004386">
    <property type="term" value="F:helicase activity"/>
    <property type="evidence" value="ECO:0007669"/>
    <property type="project" value="UniProtKB-UniRule"/>
</dbReference>
<dbReference type="GO" id="GO:0016817">
    <property type="term" value="F:hydrolase activity, acting on acid anhydrides"/>
    <property type="evidence" value="ECO:0007669"/>
    <property type="project" value="InterPro"/>
</dbReference>
<dbReference type="GO" id="GO:0006281">
    <property type="term" value="P:DNA repair"/>
    <property type="evidence" value="ECO:0000318"/>
    <property type="project" value="GO_Central"/>
</dbReference>
<dbReference type="GO" id="GO:0006355">
    <property type="term" value="P:regulation of DNA-templated transcription"/>
    <property type="evidence" value="ECO:0007669"/>
    <property type="project" value="UniProtKB-UniRule"/>
</dbReference>
<dbReference type="CDD" id="cd18011">
    <property type="entry name" value="DEXDc_RapA"/>
    <property type="match status" value="1"/>
</dbReference>
<dbReference type="CDD" id="cd18793">
    <property type="entry name" value="SF2_C_SNF"/>
    <property type="match status" value="1"/>
</dbReference>
<dbReference type="Gene3D" id="2.30.30.140">
    <property type="match status" value="1"/>
</dbReference>
<dbReference type="Gene3D" id="2.30.30.930">
    <property type="match status" value="1"/>
</dbReference>
<dbReference type="Gene3D" id="3.30.360.80">
    <property type="match status" value="1"/>
</dbReference>
<dbReference type="Gene3D" id="6.10.140.1500">
    <property type="match status" value="1"/>
</dbReference>
<dbReference type="Gene3D" id="6.10.140.2230">
    <property type="match status" value="1"/>
</dbReference>
<dbReference type="Gene3D" id="3.40.50.300">
    <property type="entry name" value="P-loop containing nucleotide triphosphate hydrolases"/>
    <property type="match status" value="1"/>
</dbReference>
<dbReference type="Gene3D" id="3.40.50.10810">
    <property type="entry name" value="Tandem AAA-ATPase domain"/>
    <property type="match status" value="1"/>
</dbReference>
<dbReference type="HAMAP" id="MF_01821">
    <property type="entry name" value="Helicase_RapA"/>
    <property type="match status" value="1"/>
</dbReference>
<dbReference type="InterPro" id="IPR014001">
    <property type="entry name" value="Helicase_ATP-bd"/>
</dbReference>
<dbReference type="InterPro" id="IPR001650">
    <property type="entry name" value="Helicase_C-like"/>
</dbReference>
<dbReference type="InterPro" id="IPR023949">
    <property type="entry name" value="Helicase_RapA"/>
</dbReference>
<dbReference type="InterPro" id="IPR027417">
    <property type="entry name" value="P-loop_NTPase"/>
</dbReference>
<dbReference type="InterPro" id="IPR022737">
    <property type="entry name" value="RapA_C"/>
</dbReference>
<dbReference type="InterPro" id="IPR038718">
    <property type="entry name" value="SNF2-like_sf"/>
</dbReference>
<dbReference type="InterPro" id="IPR049730">
    <property type="entry name" value="SNF2/RAD54-like_C"/>
</dbReference>
<dbReference type="InterPro" id="IPR000330">
    <property type="entry name" value="SNF2_N"/>
</dbReference>
<dbReference type="InterPro" id="IPR040765">
    <property type="entry name" value="Tudor_1_RapA"/>
</dbReference>
<dbReference type="InterPro" id="IPR040766">
    <property type="entry name" value="Tudor_2_RapA"/>
</dbReference>
<dbReference type="NCBIfam" id="NF003426">
    <property type="entry name" value="PRK04914.1"/>
    <property type="match status" value="2"/>
</dbReference>
<dbReference type="PANTHER" id="PTHR45766">
    <property type="entry name" value="DNA ANNEALING HELICASE AND ENDONUCLEASE ZRANB3 FAMILY MEMBER"/>
    <property type="match status" value="1"/>
</dbReference>
<dbReference type="PANTHER" id="PTHR45766:SF6">
    <property type="entry name" value="SWI_SNF-RELATED MATRIX-ASSOCIATED ACTIN-DEPENDENT REGULATOR OF CHROMATIN SUBFAMILY A-LIKE PROTEIN 1"/>
    <property type="match status" value="1"/>
</dbReference>
<dbReference type="Pfam" id="PF00271">
    <property type="entry name" value="Helicase_C"/>
    <property type="match status" value="1"/>
</dbReference>
<dbReference type="Pfam" id="PF12137">
    <property type="entry name" value="RapA_C"/>
    <property type="match status" value="1"/>
</dbReference>
<dbReference type="Pfam" id="PF00176">
    <property type="entry name" value="SNF2-rel_dom"/>
    <property type="match status" value="1"/>
</dbReference>
<dbReference type="Pfam" id="PF18339">
    <property type="entry name" value="Tudor_1_RapA"/>
    <property type="match status" value="1"/>
</dbReference>
<dbReference type="Pfam" id="PF18337">
    <property type="entry name" value="Tudor_RapA"/>
    <property type="match status" value="1"/>
</dbReference>
<dbReference type="SMART" id="SM00487">
    <property type="entry name" value="DEXDc"/>
    <property type="match status" value="1"/>
</dbReference>
<dbReference type="SMART" id="SM00490">
    <property type="entry name" value="HELICc"/>
    <property type="match status" value="1"/>
</dbReference>
<dbReference type="SUPFAM" id="SSF52540">
    <property type="entry name" value="P-loop containing nucleoside triphosphate hydrolases"/>
    <property type="match status" value="2"/>
</dbReference>
<dbReference type="PROSITE" id="PS51192">
    <property type="entry name" value="HELICASE_ATP_BIND_1"/>
    <property type="match status" value="1"/>
</dbReference>
<dbReference type="PROSITE" id="PS51194">
    <property type="entry name" value="HELICASE_CTER"/>
    <property type="match status" value="1"/>
</dbReference>
<comment type="function">
    <text evidence="1">Transcription regulator that activates transcription by stimulating RNA polymerase (RNAP) recycling in case of stress conditions such as supercoiled DNA or high salt concentrations. Probably acts by releasing the RNAP, when it is trapped or immobilized on tightly supercoiled DNA. Does not activate transcription on linear DNA. Probably not involved in DNA repair.</text>
</comment>
<comment type="subunit">
    <text evidence="1">Interacts with the RNAP. Has a higher affinity for the core RNAP than for the holoenzyme. Its ATPase activity is stimulated by binding to RNAP.</text>
</comment>
<comment type="similarity">
    <text evidence="1">Belongs to the SNF2/RAD54 helicase family. RapA subfamily.</text>
</comment>
<evidence type="ECO:0000255" key="1">
    <source>
        <dbReference type="HAMAP-Rule" id="MF_01821"/>
    </source>
</evidence>